<protein>
    <recommendedName>
        <fullName>Dynein axonemal light chain 1</fullName>
        <shortName evidence="2">LC1</shortName>
    </recommendedName>
</protein>
<gene>
    <name evidence="10" type="primary">DNAL1</name>
    <name type="synonym">C14orf168</name>
</gene>
<keyword id="KW-0002">3D-structure</keyword>
<keyword id="KW-0007">Acetylation</keyword>
<keyword id="KW-0025">Alternative splicing</keyword>
<keyword id="KW-0966">Cell projection</keyword>
<keyword id="KW-1186">Ciliopathy</keyword>
<keyword id="KW-0963">Cytoplasm</keyword>
<keyword id="KW-0206">Cytoskeleton</keyword>
<keyword id="KW-0225">Disease variant</keyword>
<keyword id="KW-0243">Dynein</keyword>
<keyword id="KW-1012">Kartagener syndrome</keyword>
<keyword id="KW-0433">Leucine-rich repeat</keyword>
<keyword id="KW-0493">Microtubule</keyword>
<keyword id="KW-0505">Motor protein</keyword>
<keyword id="KW-0597">Phosphoprotein</keyword>
<keyword id="KW-0990">Primary ciliary dyskinesia</keyword>
<keyword id="KW-1267">Proteomics identification</keyword>
<keyword id="KW-1185">Reference proteome</keyword>
<keyword id="KW-0677">Repeat</keyword>
<comment type="function">
    <text evidence="2 8">Part of the multisubunit axonemal ATPase complexes that generate the force for cilia motility and govern beat frequency (By similarity). Component of the outer arm dynein (ODA). May be involved in a mechanosensory feedback mechanism controlling ODA activity based on external conformational cues by tethering the outer arm dynein heavy chain (DNAH5) to the microtubule within the axoneme (By similarity). Important for ciliary function in the airways and for the function of the cilia that produce the nodal flow essential for the determination of the left-right asymmetry (PubMed:21496787).</text>
</comment>
<comment type="subunit">
    <text evidence="3 4 5">Interacts with ZMYND10 (via C-terminus) (PubMed:29601588). Interacts with DNAH5, a outer arm dynein heavy chain (PubMed:15845866, PubMed:21496787). Interacts with tubulin located within the A-tubule of the outer doublets in a ATP-independent manner (PubMed:21496787).</text>
</comment>
<comment type="interaction">
    <interactant intactId="EBI-12843080">
        <id>Q4LDG9</id>
    </interactant>
    <interactant intactId="EBI-1043135">
        <id>Q9H9A6</id>
        <label>LRRC40</label>
    </interactant>
    <organismsDiffer>false</organismsDiffer>
    <experiments>3</experiments>
</comment>
<comment type="subcellular location">
    <subcellularLocation>
        <location evidence="9">Cytoplasm</location>
        <location evidence="9">Cytoskeleton</location>
        <location evidence="9">Cilium axoneme</location>
    </subcellularLocation>
</comment>
<comment type="alternative products">
    <event type="alternative splicing"/>
    <isoform>
        <id>Q4LDG9-1</id>
        <name>1</name>
        <sequence type="displayed"/>
    </isoform>
    <isoform>
        <id>Q4LDG9-2</id>
        <name>2</name>
        <sequence type="described" ref="VSP_023982"/>
    </isoform>
    <isoform>
        <id>Q4LDG9-3</id>
        <name>3</name>
        <sequence type="described" ref="VSP_043590"/>
    </isoform>
</comment>
<comment type="tissue specificity">
    <text evidence="3">Expressed in tissues carrying motile cilia such as respiratory epithelia, ependyma and testis.</text>
</comment>
<comment type="disease" evidence="4">
    <disease id="DI-03134">
        <name>Ciliary dyskinesia, primary, 16</name>
        <acronym>CILD16</acronym>
        <description>A disorder characterized by abnormalities of motile cilia. Respiratory infections leading to chronic inflammation and bronchiectasis are recurrent, due to defects in the respiratory cilia; reduced fertility is often observed in male patients due to abnormalities of sperm tails. Half of the patients exhibit randomization of left-right body asymmetry and situs inversus, due to dysfunction of monocilia at the embryonic node. Primary ciliary dyskinesia associated with situs inversus is referred to as Kartagener syndrome.</description>
        <dbReference type="MIM" id="614017"/>
    </disease>
    <text>The disease is caused by variants affecting the gene represented in this entry.</text>
</comment>
<comment type="miscellaneous">
    <text evidence="2">Outer (ODAs) and inner (IDAs) dynein arms contain the molecular motors that generate the force to move cilia by ATP-dependent reactions. There are two mechanosensory systems that monitor and respond to the mechanical state (curvature) of the axoneme. One system involves the central pair microtubule complex and radial spokes and the second system involves the outer dynein arms.</text>
</comment>
<comment type="similarity">
    <text evidence="9">Belongs to the dynein light chain LC1-type family.</text>
</comment>
<comment type="sequence caution" evidence="9">
    <conflict type="erroneous initiation">
        <sequence resource="EMBL-CDS" id="AAH05343"/>
    </conflict>
    <text>Truncated N-terminus.</text>
</comment>
<evidence type="ECO:0000250" key="1">
    <source>
        <dbReference type="UniProtKB" id="Q05A62"/>
    </source>
</evidence>
<evidence type="ECO:0000250" key="2">
    <source>
        <dbReference type="UniProtKB" id="Q9XHH2"/>
    </source>
</evidence>
<evidence type="ECO:0000269" key="3">
    <source>
    </source>
</evidence>
<evidence type="ECO:0000269" key="4">
    <source>
    </source>
</evidence>
<evidence type="ECO:0000269" key="5">
    <source>
    </source>
</evidence>
<evidence type="ECO:0000303" key="6">
    <source>
    </source>
</evidence>
<evidence type="ECO:0000303" key="7">
    <source>
    </source>
</evidence>
<evidence type="ECO:0000303" key="8">
    <source>
    </source>
</evidence>
<evidence type="ECO:0000305" key="9"/>
<evidence type="ECO:0000312" key="10">
    <source>
        <dbReference type="HGNC" id="HGNC:23247"/>
    </source>
</evidence>
<evidence type="ECO:0007744" key="11">
    <source>
    </source>
</evidence>
<reference key="1">
    <citation type="journal article" date="2005" name="Am. J. Respir. Cell Mol. Biol.">
        <title>Identification and analysis of axonemal dynein light chain 1 in primary ciliary dyskinesia patients.</title>
        <authorList>
            <person name="Horvath J."/>
            <person name="Fliegauf M."/>
            <person name="Olbrich H."/>
            <person name="Kispert A."/>
            <person name="King S.M."/>
            <person name="Mitchison H."/>
            <person name="Zariwala M.A."/>
            <person name="Knowles M.R."/>
            <person name="Sudbrak R."/>
            <person name="Fekete G."/>
            <person name="Neesen J."/>
            <person name="Reinhardt R."/>
            <person name="Omran H."/>
        </authorList>
    </citation>
    <scope>NUCLEOTIDE SEQUENCE [MRNA] (ISOFORM 1)</scope>
    <scope>INTERACTION WITH DNAH5</scope>
    <scope>TISSUE SPECIFICITY</scope>
</reference>
<reference key="2">
    <citation type="journal article" date="2004" name="Nat. Genet.">
        <title>Complete sequencing and characterization of 21,243 full-length human cDNAs.</title>
        <authorList>
            <person name="Ota T."/>
            <person name="Suzuki Y."/>
            <person name="Nishikawa T."/>
            <person name="Otsuki T."/>
            <person name="Sugiyama T."/>
            <person name="Irie R."/>
            <person name="Wakamatsu A."/>
            <person name="Hayashi K."/>
            <person name="Sato H."/>
            <person name="Nagai K."/>
            <person name="Kimura K."/>
            <person name="Makita H."/>
            <person name="Sekine M."/>
            <person name="Obayashi M."/>
            <person name="Nishi T."/>
            <person name="Shibahara T."/>
            <person name="Tanaka T."/>
            <person name="Ishii S."/>
            <person name="Yamamoto J."/>
            <person name="Saito K."/>
            <person name="Kawai Y."/>
            <person name="Isono Y."/>
            <person name="Nakamura Y."/>
            <person name="Nagahari K."/>
            <person name="Murakami K."/>
            <person name="Yasuda T."/>
            <person name="Iwayanagi T."/>
            <person name="Wagatsuma M."/>
            <person name="Shiratori A."/>
            <person name="Sudo H."/>
            <person name="Hosoiri T."/>
            <person name="Kaku Y."/>
            <person name="Kodaira H."/>
            <person name="Kondo H."/>
            <person name="Sugawara M."/>
            <person name="Takahashi M."/>
            <person name="Kanda K."/>
            <person name="Yokoi T."/>
            <person name="Furuya T."/>
            <person name="Kikkawa E."/>
            <person name="Omura Y."/>
            <person name="Abe K."/>
            <person name="Kamihara K."/>
            <person name="Katsuta N."/>
            <person name="Sato K."/>
            <person name="Tanikawa M."/>
            <person name="Yamazaki M."/>
            <person name="Ninomiya K."/>
            <person name="Ishibashi T."/>
            <person name="Yamashita H."/>
            <person name="Murakawa K."/>
            <person name="Fujimori K."/>
            <person name="Tanai H."/>
            <person name="Kimata M."/>
            <person name="Watanabe M."/>
            <person name="Hiraoka S."/>
            <person name="Chiba Y."/>
            <person name="Ishida S."/>
            <person name="Ono Y."/>
            <person name="Takiguchi S."/>
            <person name="Watanabe S."/>
            <person name="Yosida M."/>
            <person name="Hotuta T."/>
            <person name="Kusano J."/>
            <person name="Kanehori K."/>
            <person name="Takahashi-Fujii A."/>
            <person name="Hara H."/>
            <person name="Tanase T.-O."/>
            <person name="Nomura Y."/>
            <person name="Togiya S."/>
            <person name="Komai F."/>
            <person name="Hara R."/>
            <person name="Takeuchi K."/>
            <person name="Arita M."/>
            <person name="Imose N."/>
            <person name="Musashino K."/>
            <person name="Yuuki H."/>
            <person name="Oshima A."/>
            <person name="Sasaki N."/>
            <person name="Aotsuka S."/>
            <person name="Yoshikawa Y."/>
            <person name="Matsunawa H."/>
            <person name="Ichihara T."/>
            <person name="Shiohata N."/>
            <person name="Sano S."/>
            <person name="Moriya S."/>
            <person name="Momiyama H."/>
            <person name="Satoh N."/>
            <person name="Takami S."/>
            <person name="Terashima Y."/>
            <person name="Suzuki O."/>
            <person name="Nakagawa S."/>
            <person name="Senoh A."/>
            <person name="Mizoguchi H."/>
            <person name="Goto Y."/>
            <person name="Shimizu F."/>
            <person name="Wakebe H."/>
            <person name="Hishigaki H."/>
            <person name="Watanabe T."/>
            <person name="Sugiyama A."/>
            <person name="Takemoto M."/>
            <person name="Kawakami B."/>
            <person name="Yamazaki M."/>
            <person name="Watanabe K."/>
            <person name="Kumagai A."/>
            <person name="Itakura S."/>
            <person name="Fukuzumi Y."/>
            <person name="Fujimori Y."/>
            <person name="Komiyama M."/>
            <person name="Tashiro H."/>
            <person name="Tanigami A."/>
            <person name="Fujiwara T."/>
            <person name="Ono T."/>
            <person name="Yamada K."/>
            <person name="Fujii Y."/>
            <person name="Ozaki K."/>
            <person name="Hirao M."/>
            <person name="Ohmori Y."/>
            <person name="Kawabata A."/>
            <person name="Hikiji T."/>
            <person name="Kobatake N."/>
            <person name="Inagaki H."/>
            <person name="Ikema Y."/>
            <person name="Okamoto S."/>
            <person name="Okitani R."/>
            <person name="Kawakami T."/>
            <person name="Noguchi S."/>
            <person name="Itoh T."/>
            <person name="Shigeta K."/>
            <person name="Senba T."/>
            <person name="Matsumura K."/>
            <person name="Nakajima Y."/>
            <person name="Mizuno T."/>
            <person name="Morinaga M."/>
            <person name="Sasaki M."/>
            <person name="Togashi T."/>
            <person name="Oyama M."/>
            <person name="Hata H."/>
            <person name="Watanabe M."/>
            <person name="Komatsu T."/>
            <person name="Mizushima-Sugano J."/>
            <person name="Satoh T."/>
            <person name="Shirai Y."/>
            <person name="Takahashi Y."/>
            <person name="Nakagawa K."/>
            <person name="Okumura K."/>
            <person name="Nagase T."/>
            <person name="Nomura N."/>
            <person name="Kikuchi H."/>
            <person name="Masuho Y."/>
            <person name="Yamashita R."/>
            <person name="Nakai K."/>
            <person name="Yada T."/>
            <person name="Nakamura Y."/>
            <person name="Ohara O."/>
            <person name="Isogai T."/>
            <person name="Sugano S."/>
        </authorList>
    </citation>
    <scope>NUCLEOTIDE SEQUENCE [LARGE SCALE MRNA] (ISOFORM 3)</scope>
    <source>
        <tissue>Hippocampus</tissue>
    </source>
</reference>
<reference key="3">
    <citation type="journal article" date="2007" name="BMC Genomics">
        <title>The full-ORF clone resource of the German cDNA consortium.</title>
        <authorList>
            <person name="Bechtel S."/>
            <person name="Rosenfelder H."/>
            <person name="Duda A."/>
            <person name="Schmidt C.P."/>
            <person name="Ernst U."/>
            <person name="Wellenreuther R."/>
            <person name="Mehrle A."/>
            <person name="Schuster C."/>
            <person name="Bahr A."/>
            <person name="Bloecker H."/>
            <person name="Heubner D."/>
            <person name="Hoerlein A."/>
            <person name="Michel G."/>
            <person name="Wedler H."/>
            <person name="Koehrer K."/>
            <person name="Ottenwaelder B."/>
            <person name="Poustka A."/>
            <person name="Wiemann S."/>
            <person name="Schupp I."/>
        </authorList>
    </citation>
    <scope>NUCLEOTIDE SEQUENCE [LARGE SCALE MRNA] (ISOFORM 2)</scope>
    <source>
        <tissue>Lymph node</tissue>
    </source>
</reference>
<reference key="4">
    <citation type="journal article" date="2003" name="Nature">
        <title>The DNA sequence and analysis of human chromosome 14.</title>
        <authorList>
            <person name="Heilig R."/>
            <person name="Eckenberg R."/>
            <person name="Petit J.-L."/>
            <person name="Fonknechten N."/>
            <person name="Da Silva C."/>
            <person name="Cattolico L."/>
            <person name="Levy M."/>
            <person name="Barbe V."/>
            <person name="De Berardinis V."/>
            <person name="Ureta-Vidal A."/>
            <person name="Pelletier E."/>
            <person name="Vico V."/>
            <person name="Anthouard V."/>
            <person name="Rowen L."/>
            <person name="Madan A."/>
            <person name="Qin S."/>
            <person name="Sun H."/>
            <person name="Du H."/>
            <person name="Pepin K."/>
            <person name="Artiguenave F."/>
            <person name="Robert C."/>
            <person name="Cruaud C."/>
            <person name="Bruels T."/>
            <person name="Jaillon O."/>
            <person name="Friedlander L."/>
            <person name="Samson G."/>
            <person name="Brottier P."/>
            <person name="Cure S."/>
            <person name="Segurens B."/>
            <person name="Aniere F."/>
            <person name="Samain S."/>
            <person name="Crespeau H."/>
            <person name="Abbasi N."/>
            <person name="Aiach N."/>
            <person name="Boscus D."/>
            <person name="Dickhoff R."/>
            <person name="Dors M."/>
            <person name="Dubois I."/>
            <person name="Friedman C."/>
            <person name="Gouyvenoux M."/>
            <person name="James R."/>
            <person name="Madan A."/>
            <person name="Mairey-Estrada B."/>
            <person name="Mangenot S."/>
            <person name="Martins N."/>
            <person name="Menard M."/>
            <person name="Oztas S."/>
            <person name="Ratcliffe A."/>
            <person name="Shaffer T."/>
            <person name="Trask B."/>
            <person name="Vacherie B."/>
            <person name="Bellemere C."/>
            <person name="Belser C."/>
            <person name="Besnard-Gonnet M."/>
            <person name="Bartol-Mavel D."/>
            <person name="Boutard M."/>
            <person name="Briez-Silla S."/>
            <person name="Combette S."/>
            <person name="Dufosse-Laurent V."/>
            <person name="Ferron C."/>
            <person name="Lechaplais C."/>
            <person name="Louesse C."/>
            <person name="Muselet D."/>
            <person name="Magdelenat G."/>
            <person name="Pateau E."/>
            <person name="Petit E."/>
            <person name="Sirvain-Trukniewicz P."/>
            <person name="Trybou A."/>
            <person name="Vega-Czarny N."/>
            <person name="Bataille E."/>
            <person name="Bluet E."/>
            <person name="Bordelais I."/>
            <person name="Dubois M."/>
            <person name="Dumont C."/>
            <person name="Guerin T."/>
            <person name="Haffray S."/>
            <person name="Hammadi R."/>
            <person name="Muanga J."/>
            <person name="Pellouin V."/>
            <person name="Robert D."/>
            <person name="Wunderle E."/>
            <person name="Gauguet G."/>
            <person name="Roy A."/>
            <person name="Sainte-Marthe L."/>
            <person name="Verdier J."/>
            <person name="Verdier-Discala C."/>
            <person name="Hillier L.W."/>
            <person name="Fulton L."/>
            <person name="McPherson J."/>
            <person name="Matsuda F."/>
            <person name="Wilson R."/>
            <person name="Scarpelli C."/>
            <person name="Gyapay G."/>
            <person name="Wincker P."/>
            <person name="Saurin W."/>
            <person name="Quetier F."/>
            <person name="Waterston R."/>
            <person name="Hood L."/>
            <person name="Weissenbach J."/>
        </authorList>
    </citation>
    <scope>NUCLEOTIDE SEQUENCE [LARGE SCALE GENOMIC DNA]</scope>
</reference>
<reference key="5">
    <citation type="journal article" date="2004" name="Genome Res.">
        <title>The status, quality, and expansion of the NIH full-length cDNA project: the Mammalian Gene Collection (MGC).</title>
        <authorList>
            <consortium name="The MGC Project Team"/>
        </authorList>
    </citation>
    <scope>NUCLEOTIDE SEQUENCE [LARGE SCALE MRNA] (ISOFORM 1)</scope>
    <source>
        <tissue>Brain</tissue>
    </source>
</reference>
<reference key="6">
    <citation type="journal article" date="2012" name="Proc. Natl. Acad. Sci. U.S.A.">
        <title>N-terminal acetylome analyses and functional insights of the N-terminal acetyltransferase NatB.</title>
        <authorList>
            <person name="Van Damme P."/>
            <person name="Lasa M."/>
            <person name="Polevoda B."/>
            <person name="Gazquez C."/>
            <person name="Elosegui-Artola A."/>
            <person name="Kim D.S."/>
            <person name="De Juan-Pardo E."/>
            <person name="Demeyer K."/>
            <person name="Hole K."/>
            <person name="Larrea E."/>
            <person name="Timmerman E."/>
            <person name="Prieto J."/>
            <person name="Arnesen T."/>
            <person name="Sherman F."/>
            <person name="Gevaert K."/>
            <person name="Aldabe R."/>
        </authorList>
    </citation>
    <scope>ACETYLATION [LARGE SCALE ANALYSIS] AT ALA-2</scope>
    <scope>CLEAVAGE OF INITIATOR METHIONINE [LARGE SCALE ANALYSIS]</scope>
    <scope>IDENTIFICATION BY MASS SPECTROMETRY [LARGE SCALE ANALYSIS]</scope>
</reference>
<reference key="7">
    <citation type="journal article" date="2018" name="PLoS Genet.">
        <title>ZMYND10 stabilizes intermediate chain proteins in the cytoplasmic pre-assembly of dynein arms.</title>
        <authorList>
            <person name="Cho K.J."/>
            <person name="Noh S.H."/>
            <person name="Han S.M."/>
            <person name="Choi W.I."/>
            <person name="Kim H.Y."/>
            <person name="Yu S."/>
            <person name="Lee J.S."/>
            <person name="Rim J.H."/>
            <person name="Lee M.G."/>
            <person name="Hildebrandt F."/>
            <person name="Gee H.Y."/>
        </authorList>
    </citation>
    <scope>INTERACTION WITH ZMYND10</scope>
</reference>
<reference key="8">
    <citation type="journal article" date="2011" name="Am. J. Hum. Genet.">
        <title>Primary ciliary dyskinesia caused by homozygous mutation in DNAL1, encoding dynein light chain 1.</title>
        <authorList>
            <person name="Mazor M."/>
            <person name="Alkrinawi S."/>
            <person name="Chalifa-Caspi V."/>
            <person name="Manor E."/>
            <person name="Sheffield V.C."/>
            <person name="Aviram M."/>
            <person name="Parvari R."/>
        </authorList>
    </citation>
    <scope>VARIANT CILD16 SER-150</scope>
    <scope>SUBUNIT</scope>
    <scope>INTERACTION WITH TUBULIN</scope>
    <scope>INTERACTION WITH DNAH5</scope>
    <scope>CHARACTERIZATION OF VARIANT CILD16 SER-150</scope>
    <scope>FUNCTION</scope>
    <scope>INVOLVEMENT IN CILD16</scope>
</reference>
<sequence length="190" mass="21533">MAKATTIKEALARWEEKTGQRPSEAKEIKLYAQIPPIEKMDASLSMLANCEKLSLSTNCIEKIANLNGLKNLRILSLGRNNIKNLNGLEAVGDTLEELWISYNFIEKLKGIHIMKKLKILYMSNNLVKDWAEFVKLAELPCLEDLVFVGNPLEEKHSAENNWIEEATKRVPKLKKLDGTPVIKGDEEEDN</sequence>
<proteinExistence type="evidence at protein level"/>
<accession>Q4LDG9</accession>
<accession>B2RD38</accession>
<accession>Q5JPB7</accession>
<accession>Q9BS43</accession>
<name>DNAL1_HUMAN</name>
<dbReference type="EMBL" id="AF542071">
    <property type="protein sequence ID" value="AAQ11377.1"/>
    <property type="molecule type" value="mRNA"/>
</dbReference>
<dbReference type="EMBL" id="AK315392">
    <property type="protein sequence ID" value="BAG37785.1"/>
    <property type="molecule type" value="mRNA"/>
</dbReference>
<dbReference type="EMBL" id="AL833654">
    <property type="protein sequence ID" value="CAI46147.1"/>
    <property type="molecule type" value="mRNA"/>
</dbReference>
<dbReference type="EMBL" id="AC005225">
    <property type="status" value="NOT_ANNOTATED_CDS"/>
    <property type="molecule type" value="Genomic_DNA"/>
</dbReference>
<dbReference type="EMBL" id="AC006146">
    <property type="status" value="NOT_ANNOTATED_CDS"/>
    <property type="molecule type" value="Genomic_DNA"/>
</dbReference>
<dbReference type="EMBL" id="BC005343">
    <property type="protein sequence ID" value="AAH05343.1"/>
    <property type="status" value="ALT_INIT"/>
    <property type="molecule type" value="mRNA"/>
</dbReference>
<dbReference type="CCDS" id="CCDS45134.1">
    <molecule id="Q4LDG9-1"/>
</dbReference>
<dbReference type="CCDS" id="CCDS55928.1">
    <molecule id="Q4LDG9-3"/>
</dbReference>
<dbReference type="RefSeq" id="NP_001188295.1">
    <molecule id="Q4LDG9-3"/>
    <property type="nucleotide sequence ID" value="NM_001201366.2"/>
</dbReference>
<dbReference type="RefSeq" id="NP_113615.2">
    <molecule id="Q4LDG9-1"/>
    <property type="nucleotide sequence ID" value="NM_031427.4"/>
</dbReference>
<dbReference type="RefSeq" id="XP_016877168.1">
    <molecule id="Q4LDG9-3"/>
    <property type="nucleotide sequence ID" value="XM_017021679.3"/>
</dbReference>
<dbReference type="RefSeq" id="XP_024305483.1">
    <molecule id="Q4LDG9-3"/>
    <property type="nucleotide sequence ID" value="XM_024449715.2"/>
</dbReference>
<dbReference type="RefSeq" id="XP_054232750.1">
    <molecule id="Q4LDG9-3"/>
    <property type="nucleotide sequence ID" value="XM_054376775.1"/>
</dbReference>
<dbReference type="PDB" id="8J07">
    <property type="method" value="EM"/>
    <property type="resolution" value="4.10 A"/>
    <property type="chains" value="m3/o3/q3=1-190"/>
</dbReference>
<dbReference type="PDBsum" id="8J07"/>
<dbReference type="EMDB" id="EMD-35888"/>
<dbReference type="SMR" id="Q4LDG9"/>
<dbReference type="BioGRID" id="123677">
    <property type="interactions" value="9"/>
</dbReference>
<dbReference type="FunCoup" id="Q4LDG9">
    <property type="interactions" value="326"/>
</dbReference>
<dbReference type="IntAct" id="Q4LDG9">
    <property type="interactions" value="5"/>
</dbReference>
<dbReference type="STRING" id="9606.ENSP00000452037"/>
<dbReference type="iPTMnet" id="Q4LDG9"/>
<dbReference type="PhosphoSitePlus" id="Q4LDG9"/>
<dbReference type="BioMuta" id="DNAL1"/>
<dbReference type="DMDM" id="121944344"/>
<dbReference type="jPOST" id="Q4LDG9"/>
<dbReference type="MassIVE" id="Q4LDG9"/>
<dbReference type="PaxDb" id="9606-ENSP00000452037"/>
<dbReference type="PeptideAtlas" id="Q4LDG9"/>
<dbReference type="ProteomicsDB" id="62233">
    <molecule id="Q4LDG9-1"/>
</dbReference>
<dbReference type="ProteomicsDB" id="62234">
    <molecule id="Q4LDG9-2"/>
</dbReference>
<dbReference type="ProteomicsDB" id="62235">
    <molecule id="Q4LDG9-3"/>
</dbReference>
<dbReference type="Pumba" id="Q4LDG9"/>
<dbReference type="Antibodypedia" id="25408">
    <property type="antibodies" value="233 antibodies from 32 providers"/>
</dbReference>
<dbReference type="DNASU" id="83544"/>
<dbReference type="Ensembl" id="ENST00000311089.7">
    <molecule id="Q4LDG9-2"/>
    <property type="protein sequence ID" value="ENSP00000310360.3"/>
    <property type="gene ID" value="ENSG00000119661.15"/>
</dbReference>
<dbReference type="Ensembl" id="ENST00000553645.7">
    <molecule id="Q4LDG9-1"/>
    <property type="protein sequence ID" value="ENSP00000452037.1"/>
    <property type="gene ID" value="ENSG00000119661.15"/>
</dbReference>
<dbReference type="Ensembl" id="ENST00000554871.5">
    <molecule id="Q4LDG9-3"/>
    <property type="protein sequence ID" value="ENSP00000451834.1"/>
    <property type="gene ID" value="ENSG00000119661.15"/>
</dbReference>
<dbReference type="GeneID" id="83544"/>
<dbReference type="KEGG" id="hsa:83544"/>
<dbReference type="MANE-Select" id="ENST00000553645.7">
    <property type="protein sequence ID" value="ENSP00000452037.1"/>
    <property type="RefSeq nucleotide sequence ID" value="NM_031427.4"/>
    <property type="RefSeq protein sequence ID" value="NP_113615.2"/>
</dbReference>
<dbReference type="UCSC" id="uc001xoq.5">
    <molecule id="Q4LDG9-1"/>
    <property type="organism name" value="human"/>
</dbReference>
<dbReference type="AGR" id="HGNC:23247"/>
<dbReference type="CTD" id="83544"/>
<dbReference type="DisGeNET" id="83544"/>
<dbReference type="GeneCards" id="DNAL1"/>
<dbReference type="GeneReviews" id="DNAL1"/>
<dbReference type="HGNC" id="HGNC:23247">
    <property type="gene designation" value="DNAL1"/>
</dbReference>
<dbReference type="HPA" id="ENSG00000119661">
    <property type="expression patterns" value="Tissue enhanced (testis)"/>
</dbReference>
<dbReference type="MalaCards" id="DNAL1"/>
<dbReference type="MIM" id="610062">
    <property type="type" value="gene"/>
</dbReference>
<dbReference type="MIM" id="614017">
    <property type="type" value="phenotype"/>
</dbReference>
<dbReference type="neXtProt" id="NX_Q4LDG9"/>
<dbReference type="OpenTargets" id="ENSG00000119661"/>
<dbReference type="Orphanet" id="244">
    <property type="disease" value="Primary ciliary dyskinesia"/>
</dbReference>
<dbReference type="PharmGKB" id="PA162383938"/>
<dbReference type="VEuPathDB" id="HostDB:ENSG00000119661"/>
<dbReference type="eggNOG" id="KOG0531">
    <property type="taxonomic scope" value="Eukaryota"/>
</dbReference>
<dbReference type="GeneTree" id="ENSGT00390000016904"/>
<dbReference type="HOGENOM" id="CLU_092189_0_0_1"/>
<dbReference type="InParanoid" id="Q4LDG9"/>
<dbReference type="OMA" id="NCERISM"/>
<dbReference type="OrthoDB" id="266138at2759"/>
<dbReference type="PAN-GO" id="Q4LDG9">
    <property type="GO annotations" value="4 GO annotations based on evolutionary models"/>
</dbReference>
<dbReference type="PhylomeDB" id="Q4LDG9"/>
<dbReference type="TreeFam" id="TF323974"/>
<dbReference type="PathwayCommons" id="Q4LDG9"/>
<dbReference type="SignaLink" id="Q4LDG9"/>
<dbReference type="BioGRID-ORCS" id="83544">
    <property type="hits" value="5 hits in 1145 CRISPR screens"/>
</dbReference>
<dbReference type="ChiTaRS" id="DNAL1">
    <property type="organism name" value="human"/>
</dbReference>
<dbReference type="GeneWiki" id="DNAL1"/>
<dbReference type="GenomeRNAi" id="83544"/>
<dbReference type="Pharos" id="Q4LDG9">
    <property type="development level" value="Tbio"/>
</dbReference>
<dbReference type="PRO" id="PR:Q4LDG9"/>
<dbReference type="Proteomes" id="UP000005640">
    <property type="component" value="Chromosome 14"/>
</dbReference>
<dbReference type="RNAct" id="Q4LDG9">
    <property type="molecule type" value="protein"/>
</dbReference>
<dbReference type="Bgee" id="ENSG00000119661">
    <property type="expression patterns" value="Expressed in buccal mucosa cell and 164 other cell types or tissues"/>
</dbReference>
<dbReference type="ExpressionAtlas" id="Q4LDG9">
    <property type="expression patterns" value="baseline and differential"/>
</dbReference>
<dbReference type="GO" id="GO:0005737">
    <property type="term" value="C:cytoplasm"/>
    <property type="evidence" value="ECO:0000318"/>
    <property type="project" value="GO_Central"/>
</dbReference>
<dbReference type="GO" id="GO:0005874">
    <property type="term" value="C:microtubule"/>
    <property type="evidence" value="ECO:0007669"/>
    <property type="project" value="UniProtKB-KW"/>
</dbReference>
<dbReference type="GO" id="GO:0036157">
    <property type="term" value="C:outer dynein arm"/>
    <property type="evidence" value="ECO:0000250"/>
    <property type="project" value="UniProtKB"/>
</dbReference>
<dbReference type="GO" id="GO:0043014">
    <property type="term" value="F:alpha-tubulin binding"/>
    <property type="evidence" value="ECO:0000315"/>
    <property type="project" value="UniProtKB"/>
</dbReference>
<dbReference type="GO" id="GO:0045504">
    <property type="term" value="F:dynein heavy chain binding"/>
    <property type="evidence" value="ECO:0000314"/>
    <property type="project" value="UniProtKB"/>
</dbReference>
<dbReference type="GO" id="GO:0036158">
    <property type="term" value="P:outer dynein arm assembly"/>
    <property type="evidence" value="ECO:0000315"/>
    <property type="project" value="UniProtKB"/>
</dbReference>
<dbReference type="FunFam" id="3.80.10.10:FF:000049">
    <property type="entry name" value="Dynein light chain 1"/>
    <property type="match status" value="1"/>
</dbReference>
<dbReference type="Gene3D" id="3.80.10.10">
    <property type="entry name" value="Ribonuclease Inhibitor"/>
    <property type="match status" value="1"/>
</dbReference>
<dbReference type="InterPro" id="IPR001611">
    <property type="entry name" value="Leu-rich_rpt"/>
</dbReference>
<dbReference type="InterPro" id="IPR025875">
    <property type="entry name" value="Leu-rich_rpt_4"/>
</dbReference>
<dbReference type="InterPro" id="IPR032675">
    <property type="entry name" value="LRR_dom_sf"/>
</dbReference>
<dbReference type="PANTHER" id="PTHR15454:SF33">
    <property type="entry name" value="DYNEIN AXONEMAL LIGHT CHAIN 1"/>
    <property type="match status" value="1"/>
</dbReference>
<dbReference type="PANTHER" id="PTHR15454">
    <property type="entry name" value="NISCHARIN RELATED"/>
    <property type="match status" value="1"/>
</dbReference>
<dbReference type="Pfam" id="PF12799">
    <property type="entry name" value="LRR_4"/>
    <property type="match status" value="2"/>
</dbReference>
<dbReference type="SMART" id="SM00365">
    <property type="entry name" value="LRR_SD22"/>
    <property type="match status" value="4"/>
</dbReference>
<dbReference type="SUPFAM" id="SSF52058">
    <property type="entry name" value="L domain-like"/>
    <property type="match status" value="1"/>
</dbReference>
<dbReference type="PROSITE" id="PS51450">
    <property type="entry name" value="LRR"/>
    <property type="match status" value="4"/>
</dbReference>
<feature type="initiator methionine" description="Removed" evidence="11">
    <location>
        <position position="1"/>
    </location>
</feature>
<feature type="chain" id="PRO_0000281130" description="Dynein axonemal light chain 1">
    <location>
        <begin position="2"/>
        <end position="190"/>
    </location>
</feature>
<feature type="repeat" description="LRR 1">
    <location>
        <begin position="49"/>
        <end position="70"/>
    </location>
</feature>
<feature type="repeat" description="LRR 2">
    <location>
        <begin position="71"/>
        <end position="92"/>
    </location>
</feature>
<feature type="repeat" description="LRR 3">
    <location>
        <begin position="94"/>
        <end position="115"/>
    </location>
</feature>
<feature type="repeat" description="LRR 4">
    <location>
        <begin position="116"/>
        <end position="137"/>
    </location>
</feature>
<feature type="domain" description="LRRCT">
    <location>
        <begin position="150"/>
        <end position="190"/>
    </location>
</feature>
<feature type="modified residue" description="N-acetylalanine" evidence="11">
    <location>
        <position position="2"/>
    </location>
</feature>
<feature type="modified residue" description="Phosphoserine" evidence="1">
    <location>
        <position position="56"/>
    </location>
</feature>
<feature type="splice variant" id="VSP_023982" description="In isoform 2." evidence="7">
    <location>
        <begin position="1"/>
        <end position="113"/>
    </location>
</feature>
<feature type="splice variant" id="VSP_043590" description="In isoform 3." evidence="6">
    <location>
        <begin position="1"/>
        <end position="39"/>
    </location>
</feature>
<feature type="sequence variant" id="VAR_065739" description="In CILD16; reduced tethering interaction between DNAH5 and tubulin; dbSNP:rs387907021." evidence="4">
    <original>N</original>
    <variation>S</variation>
    <location>
        <position position="150"/>
    </location>
</feature>
<organism>
    <name type="scientific">Homo sapiens</name>
    <name type="common">Human</name>
    <dbReference type="NCBI Taxonomy" id="9606"/>
    <lineage>
        <taxon>Eukaryota</taxon>
        <taxon>Metazoa</taxon>
        <taxon>Chordata</taxon>
        <taxon>Craniata</taxon>
        <taxon>Vertebrata</taxon>
        <taxon>Euteleostomi</taxon>
        <taxon>Mammalia</taxon>
        <taxon>Eutheria</taxon>
        <taxon>Euarchontoglires</taxon>
        <taxon>Primates</taxon>
        <taxon>Haplorrhini</taxon>
        <taxon>Catarrhini</taxon>
        <taxon>Hominidae</taxon>
        <taxon>Homo</taxon>
    </lineage>
</organism>